<name>ARP2_CHICK</name>
<evidence type="ECO:0000250" key="1">
    <source>
        <dbReference type="UniProtKB" id="A7MB62"/>
    </source>
</evidence>
<evidence type="ECO:0000250" key="2">
    <source>
        <dbReference type="UniProtKB" id="P61160"/>
    </source>
</evidence>
<evidence type="ECO:0000250" key="3">
    <source>
        <dbReference type="UniProtKB" id="Q7ZTP2"/>
    </source>
</evidence>
<evidence type="ECO:0000305" key="4"/>
<gene>
    <name type="primary">ACTR2</name>
    <name type="synonym">ARP2</name>
</gene>
<dbReference type="EMBL" id="X73971">
    <property type="protein sequence ID" value="CAA52151.1"/>
    <property type="molecule type" value="mRNA"/>
</dbReference>
<dbReference type="PIR" id="JC4039">
    <property type="entry name" value="JC4039"/>
</dbReference>
<dbReference type="RefSeq" id="NP_990555.1">
    <property type="nucleotide sequence ID" value="NM_205224.2"/>
</dbReference>
<dbReference type="SMR" id="P53488"/>
<dbReference type="FunCoup" id="P53488">
    <property type="interactions" value="3168"/>
</dbReference>
<dbReference type="STRING" id="9031.ENSGALP00000065109"/>
<dbReference type="PaxDb" id="9031-ENSGALP00000014260"/>
<dbReference type="Ensembl" id="ENSGALT00010039185.1">
    <property type="protein sequence ID" value="ENSGALP00010022619.1"/>
    <property type="gene ID" value="ENSGALG00010016276.1"/>
</dbReference>
<dbReference type="GeneID" id="396147"/>
<dbReference type="KEGG" id="gga:396147"/>
<dbReference type="CTD" id="10097"/>
<dbReference type="VEuPathDB" id="HostDB:geneid_396147"/>
<dbReference type="eggNOG" id="KOG0677">
    <property type="taxonomic scope" value="Eukaryota"/>
</dbReference>
<dbReference type="GeneTree" id="ENSGT00940000154556"/>
<dbReference type="HOGENOM" id="CLU_027965_0_0_1"/>
<dbReference type="InParanoid" id="P53488"/>
<dbReference type="OrthoDB" id="10251209at2759"/>
<dbReference type="PhylomeDB" id="P53488"/>
<dbReference type="Reactome" id="R-GGA-2029482">
    <property type="pathway name" value="Regulation of actin dynamics for phagocytic cup formation"/>
</dbReference>
<dbReference type="Reactome" id="R-GGA-3928662">
    <property type="pathway name" value="EPHB-mediated forward signaling"/>
</dbReference>
<dbReference type="Reactome" id="R-GGA-5663213">
    <property type="pathway name" value="RHO GTPases Activate WASPs and WAVEs"/>
</dbReference>
<dbReference type="Reactome" id="R-GGA-6798695">
    <property type="pathway name" value="Neutrophil degranulation"/>
</dbReference>
<dbReference type="Reactome" id="R-GGA-8856828">
    <property type="pathway name" value="Clathrin-mediated endocytosis"/>
</dbReference>
<dbReference type="PRO" id="PR:P53488"/>
<dbReference type="Proteomes" id="UP000000539">
    <property type="component" value="Chromosome 3"/>
</dbReference>
<dbReference type="Bgee" id="ENSGALG00000008779">
    <property type="expression patterns" value="Expressed in spleen and 14 other cell types or tissues"/>
</dbReference>
<dbReference type="GO" id="GO:0005885">
    <property type="term" value="C:Arp2/3 protein complex"/>
    <property type="evidence" value="ECO:0000250"/>
    <property type="project" value="UniProtKB"/>
</dbReference>
<dbReference type="GO" id="GO:0005938">
    <property type="term" value="C:cell cortex"/>
    <property type="evidence" value="ECO:0000318"/>
    <property type="project" value="GO_Central"/>
</dbReference>
<dbReference type="GO" id="GO:0042995">
    <property type="term" value="C:cell projection"/>
    <property type="evidence" value="ECO:0007669"/>
    <property type="project" value="UniProtKB-SubCell"/>
</dbReference>
<dbReference type="GO" id="GO:0005737">
    <property type="term" value="C:cytoplasm"/>
    <property type="evidence" value="ECO:0000250"/>
    <property type="project" value="UniProtKB"/>
</dbReference>
<dbReference type="GO" id="GO:0005634">
    <property type="term" value="C:nucleus"/>
    <property type="evidence" value="ECO:0000250"/>
    <property type="project" value="UniProtKB"/>
</dbReference>
<dbReference type="GO" id="GO:0035861">
    <property type="term" value="C:site of double-strand break"/>
    <property type="evidence" value="ECO:0000250"/>
    <property type="project" value="UniProtKB"/>
</dbReference>
<dbReference type="GO" id="GO:0003779">
    <property type="term" value="F:actin binding"/>
    <property type="evidence" value="ECO:0007669"/>
    <property type="project" value="UniProtKB-KW"/>
</dbReference>
<dbReference type="GO" id="GO:0005524">
    <property type="term" value="F:ATP binding"/>
    <property type="evidence" value="ECO:0007669"/>
    <property type="project" value="UniProtKB-KW"/>
</dbReference>
<dbReference type="GO" id="GO:0034314">
    <property type="term" value="P:Arp2/3 complex-mediated actin nucleation"/>
    <property type="evidence" value="ECO:0000250"/>
    <property type="project" value="UniProtKB"/>
</dbReference>
<dbReference type="GO" id="GO:1905168">
    <property type="term" value="P:positive regulation of double-strand break repair via homologous recombination"/>
    <property type="evidence" value="ECO:0000250"/>
    <property type="project" value="UniProtKB"/>
</dbReference>
<dbReference type="GO" id="GO:0045944">
    <property type="term" value="P:positive regulation of transcription by RNA polymerase II"/>
    <property type="evidence" value="ECO:0000250"/>
    <property type="project" value="UniProtKB"/>
</dbReference>
<dbReference type="CDD" id="cd10220">
    <property type="entry name" value="ASKHA_NBD_Arp2"/>
    <property type="match status" value="1"/>
</dbReference>
<dbReference type="FunFam" id="3.30.420.40:FF:000538">
    <property type="entry name" value="Actin-related protein 2"/>
    <property type="match status" value="1"/>
</dbReference>
<dbReference type="FunFam" id="3.90.640.10:FF:000005">
    <property type="entry name" value="Actin-related protein 2"/>
    <property type="match status" value="1"/>
</dbReference>
<dbReference type="Gene3D" id="3.30.420.40">
    <property type="match status" value="2"/>
</dbReference>
<dbReference type="Gene3D" id="3.90.640.10">
    <property type="entry name" value="Actin, Chain A, domain 4"/>
    <property type="match status" value="1"/>
</dbReference>
<dbReference type="InterPro" id="IPR004000">
    <property type="entry name" value="Actin"/>
</dbReference>
<dbReference type="InterPro" id="IPR020902">
    <property type="entry name" value="Actin/actin-like_CS"/>
</dbReference>
<dbReference type="InterPro" id="IPR043129">
    <property type="entry name" value="ATPase_NBD"/>
</dbReference>
<dbReference type="PANTHER" id="PTHR11937">
    <property type="entry name" value="ACTIN"/>
    <property type="match status" value="1"/>
</dbReference>
<dbReference type="Pfam" id="PF00022">
    <property type="entry name" value="Actin"/>
    <property type="match status" value="1"/>
</dbReference>
<dbReference type="PRINTS" id="PR00190">
    <property type="entry name" value="ACTIN"/>
</dbReference>
<dbReference type="SMART" id="SM00268">
    <property type="entry name" value="ACTIN"/>
    <property type="match status" value="1"/>
</dbReference>
<dbReference type="SUPFAM" id="SSF53067">
    <property type="entry name" value="Actin-like ATPase domain"/>
    <property type="match status" value="2"/>
</dbReference>
<dbReference type="PROSITE" id="PS01132">
    <property type="entry name" value="ACTINS_ACT_LIKE"/>
    <property type="match status" value="1"/>
</dbReference>
<sequence length="394" mass="44702">MDTLGRKVVVCDNGTGFVKCGYAGSNFPEHIFPALVGRPIIRSTAKVGNIEIKDLMVGDEASELRSMLEVNYPMENGIVRNWDDMKHLWDYTFGPEKLNIDTKNCKILLTEPPMNPTKNREKIVEVMFETYQFSGVYVAIQAVLTLYAQGLLTGVVVDSGDGVTHICPVYEGFSLPHLTRRLDIAGRDITRYLIKLLLLRGYAFNHSADFETVRMIKEKLCYVGYNIEQEQKLALETTVLVESYTLPDGRIIKVGGERFEAPEALFQPHLINVEGVGVAELLFNTIQAADIDTRSEFYKHIVLSGGSTMYPGLPSRLERELKQLYLERVLKGDVEKLSKFKIRIEDPPRRKHMVFLGGAVLADIMKDKDNFWMTRQEYQEKGVRVLEKLGVTVR</sequence>
<organism>
    <name type="scientific">Gallus gallus</name>
    <name type="common">Chicken</name>
    <dbReference type="NCBI Taxonomy" id="9031"/>
    <lineage>
        <taxon>Eukaryota</taxon>
        <taxon>Metazoa</taxon>
        <taxon>Chordata</taxon>
        <taxon>Craniata</taxon>
        <taxon>Vertebrata</taxon>
        <taxon>Euteleostomi</taxon>
        <taxon>Archelosauria</taxon>
        <taxon>Archosauria</taxon>
        <taxon>Dinosauria</taxon>
        <taxon>Saurischia</taxon>
        <taxon>Theropoda</taxon>
        <taxon>Coelurosauria</taxon>
        <taxon>Aves</taxon>
        <taxon>Neognathae</taxon>
        <taxon>Galloanserae</taxon>
        <taxon>Galliformes</taxon>
        <taxon>Phasianidae</taxon>
        <taxon>Phasianinae</taxon>
        <taxon>Gallus</taxon>
    </lineage>
</organism>
<proteinExistence type="evidence at transcript level"/>
<comment type="function">
    <text evidence="2 3">ATP-binding component of the Arp2/3 complex, a multiprotein complex that mediates actin polymerization upon stimulation by nucleation-promoting factor (NPF) (By similarity). The Arp2/3 complex mediates the formation of branched actin networks in the cytoplasm, providing the force for cell motility (By similarity). Seems to contact the pointed end of the daughter actin filament (By similarity). In addition to its role in the cytoplasmic cytoskeleton, the Arp2/3 complex also promotes actin polymerization in the nucleus, thereby regulating gene transcription and repair of damaged DNA (By similarity). The Arp2/3 complex promotes homologous recombination (HR) repair in response to DNA damage by promoting nuclear actin polymerization, leading to drive motility of double-strand breaks (DSBs) (By similarity).</text>
</comment>
<comment type="subunit">
    <text evidence="3">Component of the Arp2/3 complex composed of ACTR2/ARP2, ACTR3/ARP3, ARPC1B/p41-ARC, ARPC2/p34-ARC, ARPC3/p21-ARC, ARPC4/p20-ARC and ARPC5/p16-ARC.</text>
</comment>
<comment type="subcellular location">
    <subcellularLocation>
        <location evidence="3">Cytoplasm</location>
        <location evidence="3">Cytoskeleton</location>
    </subcellularLocation>
    <subcellularLocation>
        <location evidence="3">Cell projection</location>
    </subcellularLocation>
    <subcellularLocation>
        <location evidence="3">Nucleus</location>
    </subcellularLocation>
</comment>
<comment type="similarity">
    <text evidence="4">Belongs to the actin family. ARP2 subfamily.</text>
</comment>
<feature type="chain" id="PRO_0000089071" description="Actin-related protein 2">
    <location>
        <begin position="1"/>
        <end position="394"/>
    </location>
</feature>
<feature type="binding site" evidence="1">
    <location>
        <begin position="160"/>
        <end position="162"/>
    </location>
    <ligand>
        <name>ATP</name>
        <dbReference type="ChEBI" id="CHEBI:30616"/>
    </ligand>
</feature>
<feature type="binding site" evidence="1">
    <location>
        <begin position="214"/>
        <end position="218"/>
    </location>
    <ligand>
        <name>ATP</name>
        <dbReference type="ChEBI" id="CHEBI:30616"/>
    </ligand>
</feature>
<feature type="binding site" evidence="1">
    <location>
        <begin position="305"/>
        <end position="310"/>
    </location>
    <ligand>
        <name>ATP</name>
        <dbReference type="ChEBI" id="CHEBI:30616"/>
    </ligand>
</feature>
<protein>
    <recommendedName>
        <fullName>Actin-related protein 2</fullName>
    </recommendedName>
    <alternativeName>
        <fullName>Actin-like protein 2</fullName>
    </alternativeName>
    <alternativeName>
        <fullName>Actin-like protein ACTL</fullName>
    </alternativeName>
</protein>
<reference key="1">
    <citation type="journal article" date="1995" name="Gene">
        <title>Isolation and characterization of a cDNA encoding a chicken actin-like protein.</title>
        <authorList>
            <person name="Michaille J.J."/>
            <person name="Gouy M."/>
            <person name="Blanchet S."/>
            <person name="Duret L."/>
        </authorList>
    </citation>
    <scope>NUCLEOTIDE SEQUENCE [MRNA]</scope>
</reference>
<accession>P53488</accession>
<keyword id="KW-0009">Actin-binding</keyword>
<keyword id="KW-0067">ATP-binding</keyword>
<keyword id="KW-0966">Cell projection</keyword>
<keyword id="KW-0963">Cytoplasm</keyword>
<keyword id="KW-0206">Cytoskeleton</keyword>
<keyword id="KW-0547">Nucleotide-binding</keyword>
<keyword id="KW-0539">Nucleus</keyword>
<keyword id="KW-1185">Reference proteome</keyword>